<feature type="chain" id="PRO_0000367844" description="THAP domain-containing protein 1">
    <location>
        <begin position="1"/>
        <end position="233"/>
    </location>
</feature>
<feature type="zinc finger region" description="THAP-type" evidence="3">
    <location>
        <begin position="5"/>
        <end position="57"/>
    </location>
</feature>
<feature type="coiled-coil region" evidence="2">
    <location>
        <begin position="152"/>
        <end position="197"/>
    </location>
</feature>
<reference key="1">
    <citation type="journal article" date="2010" name="BMC Genomics">
        <title>Salmo salar and Esox lucius full-length cDNA sequences reveal changes in evolutionary pressures on a post-tetraploidization genome.</title>
        <authorList>
            <person name="Leong J.S."/>
            <person name="Jantzen S.G."/>
            <person name="von Schalburg K.R."/>
            <person name="Cooper G.A."/>
            <person name="Messmer A.M."/>
            <person name="Liao N.Y."/>
            <person name="Munro S."/>
            <person name="Moore R."/>
            <person name="Holt R.A."/>
            <person name="Jones S.J."/>
            <person name="Davidson W.S."/>
            <person name="Koop B.F."/>
        </authorList>
    </citation>
    <scope>NUCLEOTIDE SEQUENCE [LARGE SCALE MRNA]</scope>
    <source>
        <tissue>Brain</tissue>
    </source>
</reference>
<comment type="function">
    <text evidence="1">DNA-binding transcription regulator that regulates endothelial cell proliferation and G1/S cell-cycle progression. Specifically binds the 5'-[AT]NTNN[GT]GGCA[AGT]-3' core DNA sequence and acts by modulating expression of pRB-E2F cell-cycle target genes (By similarity).</text>
</comment>
<comment type="subcellular location">
    <subcellularLocation>
        <location evidence="1">Nucleus</location>
        <location evidence="1">Nucleoplasm</location>
    </subcellularLocation>
</comment>
<comment type="similarity">
    <text evidence="4">Belongs to the THAP1 family.</text>
</comment>
<keyword id="KW-0131">Cell cycle</keyword>
<keyword id="KW-0175">Coiled coil</keyword>
<keyword id="KW-0238">DNA-binding</keyword>
<keyword id="KW-0479">Metal-binding</keyword>
<keyword id="KW-0539">Nucleus</keyword>
<keyword id="KW-1185">Reference proteome</keyword>
<keyword id="KW-0804">Transcription</keyword>
<keyword id="KW-0805">Transcription regulation</keyword>
<keyword id="KW-0862">Zinc</keyword>
<keyword id="KW-0863">Zinc-finger</keyword>
<gene>
    <name type="primary">thap1</name>
</gene>
<sequence length="233" mass="27018">MVQSCSAYGCKNRYHKDKNISFHKFPLARPDVCGKWVAAMRRNNFKPTRYSNICSQHFTKDCFKPECNNRVLKENAVPSLFCFSKLQIKAESLADPFPPEMDFPLTLPSLPLSDTEETQQEIQTETHHTVDPLPLVENLPHSMSISCDHNYTVEDTVQQKKRIEQLEEQLDKLRKKLKTVQQKCRRQERQLKRFKAIGEFQRVNRDPALGEGYVILPKQLYDALKGIEPVEGP</sequence>
<protein>
    <recommendedName>
        <fullName>THAP domain-containing protein 1</fullName>
    </recommendedName>
</protein>
<accession>B5XCB8</accession>
<organism>
    <name type="scientific">Salmo salar</name>
    <name type="common">Atlantic salmon</name>
    <dbReference type="NCBI Taxonomy" id="8030"/>
    <lineage>
        <taxon>Eukaryota</taxon>
        <taxon>Metazoa</taxon>
        <taxon>Chordata</taxon>
        <taxon>Craniata</taxon>
        <taxon>Vertebrata</taxon>
        <taxon>Euteleostomi</taxon>
        <taxon>Actinopterygii</taxon>
        <taxon>Neopterygii</taxon>
        <taxon>Teleostei</taxon>
        <taxon>Protacanthopterygii</taxon>
        <taxon>Salmoniformes</taxon>
        <taxon>Salmonidae</taxon>
        <taxon>Salmoninae</taxon>
        <taxon>Salmo</taxon>
    </lineage>
</organism>
<name>THAP1_SALSA</name>
<evidence type="ECO:0000250" key="1"/>
<evidence type="ECO:0000255" key="2"/>
<evidence type="ECO:0000255" key="3">
    <source>
        <dbReference type="PROSITE-ProRule" id="PRU00309"/>
    </source>
</evidence>
<evidence type="ECO:0000305" key="4"/>
<dbReference type="EMBL" id="BT048687">
    <property type="protein sequence ID" value="ACI68488.1"/>
    <property type="molecule type" value="mRNA"/>
</dbReference>
<dbReference type="RefSeq" id="NP_001134688.1">
    <property type="nucleotide sequence ID" value="NM_001141216.2"/>
</dbReference>
<dbReference type="SMR" id="B5XCB8"/>
<dbReference type="STRING" id="8030.ENSSSAP00000047795"/>
<dbReference type="PaxDb" id="8030-ENSSSAP00000047795"/>
<dbReference type="Ensembl" id="ENSSSAT00020069956">
    <property type="protein sequence ID" value="ENSSSAP00020050294"/>
    <property type="gene ID" value="ENSSSAG00020033522"/>
</dbReference>
<dbReference type="Ensembl" id="ENSSSAT00020073504">
    <property type="protein sequence ID" value="ENSSSAP00020051131"/>
    <property type="gene ID" value="ENSSSAG00020036426"/>
</dbReference>
<dbReference type="Ensembl" id="ENSSSAT00070060214">
    <property type="protein sequence ID" value="ENSSSAP00070057698"/>
    <property type="gene ID" value="ENSSSAG00070037539"/>
</dbReference>
<dbReference type="Ensembl" id="ENSSSAT00075000232">
    <property type="protein sequence ID" value="ENSSSAP00075000117"/>
    <property type="gene ID" value="ENSSSAG00075000088"/>
</dbReference>
<dbReference type="GeneID" id="100196187"/>
<dbReference type="KEGG" id="sasa:100196187"/>
<dbReference type="CTD" id="55145"/>
<dbReference type="OMA" id="TKDCFKR"/>
<dbReference type="OrthoDB" id="514187at7898"/>
<dbReference type="Proteomes" id="UP000087266">
    <property type="component" value="Chromosome ssa01"/>
</dbReference>
<dbReference type="Bgee" id="ENSSSAG00000048517">
    <property type="expression patterns" value="Expressed in olfactory pit and 21 other cell types or tissues"/>
</dbReference>
<dbReference type="GO" id="GO:0005654">
    <property type="term" value="C:nucleoplasm"/>
    <property type="evidence" value="ECO:0007669"/>
    <property type="project" value="UniProtKB-SubCell"/>
</dbReference>
<dbReference type="GO" id="GO:0003700">
    <property type="term" value="F:DNA-binding transcription factor activity"/>
    <property type="evidence" value="ECO:0007669"/>
    <property type="project" value="TreeGrafter"/>
</dbReference>
<dbReference type="GO" id="GO:0000978">
    <property type="term" value="F:RNA polymerase II cis-regulatory region sequence-specific DNA binding"/>
    <property type="evidence" value="ECO:0007669"/>
    <property type="project" value="TreeGrafter"/>
</dbReference>
<dbReference type="GO" id="GO:0043565">
    <property type="term" value="F:sequence-specific DNA binding"/>
    <property type="evidence" value="ECO:0000250"/>
    <property type="project" value="UniProtKB"/>
</dbReference>
<dbReference type="GO" id="GO:0008270">
    <property type="term" value="F:zinc ion binding"/>
    <property type="evidence" value="ECO:0007669"/>
    <property type="project" value="UniProtKB-KW"/>
</dbReference>
<dbReference type="GO" id="GO:0006357">
    <property type="term" value="P:regulation of transcription by RNA polymerase II"/>
    <property type="evidence" value="ECO:0007669"/>
    <property type="project" value="TreeGrafter"/>
</dbReference>
<dbReference type="Gene3D" id="6.20.210.20">
    <property type="entry name" value="THAP domain"/>
    <property type="match status" value="1"/>
</dbReference>
<dbReference type="InterPro" id="IPR026516">
    <property type="entry name" value="THAP1/10"/>
</dbReference>
<dbReference type="InterPro" id="IPR006612">
    <property type="entry name" value="THAP_Znf"/>
</dbReference>
<dbReference type="InterPro" id="IPR038441">
    <property type="entry name" value="THAP_Znf_sf"/>
</dbReference>
<dbReference type="PANTHER" id="PTHR46600:SF7">
    <property type="entry name" value="SI:DKEY-228B2.6-RELATED"/>
    <property type="match status" value="1"/>
</dbReference>
<dbReference type="PANTHER" id="PTHR46600">
    <property type="entry name" value="THAP DOMAIN-CONTAINING"/>
    <property type="match status" value="1"/>
</dbReference>
<dbReference type="Pfam" id="PF05485">
    <property type="entry name" value="THAP"/>
    <property type="match status" value="1"/>
</dbReference>
<dbReference type="SMART" id="SM00692">
    <property type="entry name" value="DM3"/>
    <property type="match status" value="1"/>
</dbReference>
<dbReference type="SMART" id="SM00980">
    <property type="entry name" value="THAP"/>
    <property type="match status" value="1"/>
</dbReference>
<dbReference type="SUPFAM" id="SSF57716">
    <property type="entry name" value="Glucocorticoid receptor-like (DNA-binding domain)"/>
    <property type="match status" value="1"/>
</dbReference>
<dbReference type="PROSITE" id="PS50950">
    <property type="entry name" value="ZF_THAP"/>
    <property type="match status" value="1"/>
</dbReference>
<proteinExistence type="evidence at transcript level"/>